<accession>A8MHI5</accession>
<name>RUVC_ALKOO</name>
<organism>
    <name type="scientific">Alkaliphilus oremlandii (strain OhILAs)</name>
    <name type="common">Clostridium oremlandii (strain OhILAs)</name>
    <dbReference type="NCBI Taxonomy" id="350688"/>
    <lineage>
        <taxon>Bacteria</taxon>
        <taxon>Bacillati</taxon>
        <taxon>Bacillota</taxon>
        <taxon>Clostridia</taxon>
        <taxon>Peptostreptococcales</taxon>
        <taxon>Natronincolaceae</taxon>
        <taxon>Alkaliphilus</taxon>
    </lineage>
</organism>
<protein>
    <recommendedName>
        <fullName evidence="1">Crossover junction endodeoxyribonuclease RuvC</fullName>
        <ecNumber evidence="1">3.1.21.10</ecNumber>
    </recommendedName>
    <alternativeName>
        <fullName evidence="1">Holliday junction nuclease RuvC</fullName>
    </alternativeName>
    <alternativeName>
        <fullName evidence="1">Holliday junction resolvase RuvC</fullName>
    </alternativeName>
</protein>
<dbReference type="EC" id="3.1.21.10" evidence="1"/>
<dbReference type="EMBL" id="CP000853">
    <property type="protein sequence ID" value="ABW19267.1"/>
    <property type="molecule type" value="Genomic_DNA"/>
</dbReference>
<dbReference type="RefSeq" id="WP_012159579.1">
    <property type="nucleotide sequence ID" value="NC_009922.1"/>
</dbReference>
<dbReference type="SMR" id="A8MHI5"/>
<dbReference type="STRING" id="350688.Clos_1727"/>
<dbReference type="KEGG" id="aoe:Clos_1727"/>
<dbReference type="eggNOG" id="COG0817">
    <property type="taxonomic scope" value="Bacteria"/>
</dbReference>
<dbReference type="HOGENOM" id="CLU_091257_3_1_9"/>
<dbReference type="OrthoDB" id="9805499at2"/>
<dbReference type="Proteomes" id="UP000000269">
    <property type="component" value="Chromosome"/>
</dbReference>
<dbReference type="GO" id="GO:0005737">
    <property type="term" value="C:cytoplasm"/>
    <property type="evidence" value="ECO:0007669"/>
    <property type="project" value="UniProtKB-SubCell"/>
</dbReference>
<dbReference type="GO" id="GO:0048476">
    <property type="term" value="C:Holliday junction resolvase complex"/>
    <property type="evidence" value="ECO:0007669"/>
    <property type="project" value="UniProtKB-UniRule"/>
</dbReference>
<dbReference type="GO" id="GO:0008821">
    <property type="term" value="F:crossover junction DNA endonuclease activity"/>
    <property type="evidence" value="ECO:0007669"/>
    <property type="project" value="UniProtKB-UniRule"/>
</dbReference>
<dbReference type="GO" id="GO:0003677">
    <property type="term" value="F:DNA binding"/>
    <property type="evidence" value="ECO:0007669"/>
    <property type="project" value="UniProtKB-KW"/>
</dbReference>
<dbReference type="GO" id="GO:0000287">
    <property type="term" value="F:magnesium ion binding"/>
    <property type="evidence" value="ECO:0007669"/>
    <property type="project" value="UniProtKB-UniRule"/>
</dbReference>
<dbReference type="GO" id="GO:0006310">
    <property type="term" value="P:DNA recombination"/>
    <property type="evidence" value="ECO:0007669"/>
    <property type="project" value="UniProtKB-UniRule"/>
</dbReference>
<dbReference type="GO" id="GO:0006281">
    <property type="term" value="P:DNA repair"/>
    <property type="evidence" value="ECO:0007669"/>
    <property type="project" value="UniProtKB-UniRule"/>
</dbReference>
<dbReference type="CDD" id="cd16962">
    <property type="entry name" value="RuvC"/>
    <property type="match status" value="1"/>
</dbReference>
<dbReference type="FunFam" id="3.30.420.10:FF:000002">
    <property type="entry name" value="Crossover junction endodeoxyribonuclease RuvC"/>
    <property type="match status" value="1"/>
</dbReference>
<dbReference type="Gene3D" id="3.30.420.10">
    <property type="entry name" value="Ribonuclease H-like superfamily/Ribonuclease H"/>
    <property type="match status" value="1"/>
</dbReference>
<dbReference type="HAMAP" id="MF_00034">
    <property type="entry name" value="RuvC"/>
    <property type="match status" value="1"/>
</dbReference>
<dbReference type="InterPro" id="IPR012337">
    <property type="entry name" value="RNaseH-like_sf"/>
</dbReference>
<dbReference type="InterPro" id="IPR036397">
    <property type="entry name" value="RNaseH_sf"/>
</dbReference>
<dbReference type="InterPro" id="IPR020563">
    <property type="entry name" value="X-over_junc_endoDNase_Mg_BS"/>
</dbReference>
<dbReference type="InterPro" id="IPR002176">
    <property type="entry name" value="X-over_junc_endoDNase_RuvC"/>
</dbReference>
<dbReference type="NCBIfam" id="NF000711">
    <property type="entry name" value="PRK00039.2-1"/>
    <property type="match status" value="1"/>
</dbReference>
<dbReference type="NCBIfam" id="TIGR00228">
    <property type="entry name" value="ruvC"/>
    <property type="match status" value="1"/>
</dbReference>
<dbReference type="PANTHER" id="PTHR30194">
    <property type="entry name" value="CROSSOVER JUNCTION ENDODEOXYRIBONUCLEASE RUVC"/>
    <property type="match status" value="1"/>
</dbReference>
<dbReference type="PANTHER" id="PTHR30194:SF3">
    <property type="entry name" value="CROSSOVER JUNCTION ENDODEOXYRIBONUCLEASE RUVC"/>
    <property type="match status" value="1"/>
</dbReference>
<dbReference type="Pfam" id="PF02075">
    <property type="entry name" value="RuvC"/>
    <property type="match status" value="1"/>
</dbReference>
<dbReference type="PRINTS" id="PR00696">
    <property type="entry name" value="RSOLVASERUVC"/>
</dbReference>
<dbReference type="SUPFAM" id="SSF53098">
    <property type="entry name" value="Ribonuclease H-like"/>
    <property type="match status" value="1"/>
</dbReference>
<dbReference type="PROSITE" id="PS01321">
    <property type="entry name" value="RUVC"/>
    <property type="match status" value="1"/>
</dbReference>
<feature type="chain" id="PRO_1000057261" description="Crossover junction endodeoxyribonuclease RuvC">
    <location>
        <begin position="1"/>
        <end position="164"/>
    </location>
</feature>
<feature type="active site" evidence="1">
    <location>
        <position position="7"/>
    </location>
</feature>
<feature type="active site" evidence="1">
    <location>
        <position position="67"/>
    </location>
</feature>
<feature type="active site" evidence="1">
    <location>
        <position position="140"/>
    </location>
</feature>
<feature type="binding site" evidence="1">
    <location>
        <position position="7"/>
    </location>
    <ligand>
        <name>Mg(2+)</name>
        <dbReference type="ChEBI" id="CHEBI:18420"/>
        <label>1</label>
    </ligand>
</feature>
<feature type="binding site" evidence="1">
    <location>
        <position position="67"/>
    </location>
    <ligand>
        <name>Mg(2+)</name>
        <dbReference type="ChEBI" id="CHEBI:18420"/>
        <label>2</label>
    </ligand>
</feature>
<feature type="binding site" evidence="1">
    <location>
        <position position="140"/>
    </location>
    <ligand>
        <name>Mg(2+)</name>
        <dbReference type="ChEBI" id="CHEBI:18420"/>
        <label>1</label>
    </ligand>
</feature>
<evidence type="ECO:0000255" key="1">
    <source>
        <dbReference type="HAMAP-Rule" id="MF_00034"/>
    </source>
</evidence>
<proteinExistence type="inferred from homology"/>
<gene>
    <name evidence="1" type="primary">ruvC</name>
    <name type="ordered locus">Clos_1727</name>
</gene>
<sequence>MIILGIDPGLAILGYGIINYEGNRFKVLDYGAITTPSTMATPERLKTIYRELDRIITEYNPDTVAIEELFFNTNVKTALLVGHARGVAVLSAANHNKEIFEYTPLQVKQGVVGYGRADKSQIQQMVKTLLNLTKVPKPDDVADALAVAICHAHTGNFTEMFKIK</sequence>
<keyword id="KW-0963">Cytoplasm</keyword>
<keyword id="KW-0227">DNA damage</keyword>
<keyword id="KW-0233">DNA recombination</keyword>
<keyword id="KW-0234">DNA repair</keyword>
<keyword id="KW-0238">DNA-binding</keyword>
<keyword id="KW-0255">Endonuclease</keyword>
<keyword id="KW-0378">Hydrolase</keyword>
<keyword id="KW-0460">Magnesium</keyword>
<keyword id="KW-0479">Metal-binding</keyword>
<keyword id="KW-0540">Nuclease</keyword>
<keyword id="KW-1185">Reference proteome</keyword>
<reference key="1">
    <citation type="submission" date="2007-10" db="EMBL/GenBank/DDBJ databases">
        <title>Complete genome of Alkaliphilus oremlandii OhILAs.</title>
        <authorList>
            <person name="Copeland A."/>
            <person name="Lucas S."/>
            <person name="Lapidus A."/>
            <person name="Barry K."/>
            <person name="Detter J.C."/>
            <person name="Glavina del Rio T."/>
            <person name="Hammon N."/>
            <person name="Israni S."/>
            <person name="Dalin E."/>
            <person name="Tice H."/>
            <person name="Pitluck S."/>
            <person name="Chain P."/>
            <person name="Malfatti S."/>
            <person name="Shin M."/>
            <person name="Vergez L."/>
            <person name="Schmutz J."/>
            <person name="Larimer F."/>
            <person name="Land M."/>
            <person name="Hauser L."/>
            <person name="Kyrpides N."/>
            <person name="Mikhailova N."/>
            <person name="Stolz J.F."/>
            <person name="Dawson A."/>
            <person name="Fisher E."/>
            <person name="Crable B."/>
            <person name="Perera E."/>
            <person name="Lisak J."/>
            <person name="Ranganathan M."/>
            <person name="Basu P."/>
            <person name="Richardson P."/>
        </authorList>
    </citation>
    <scope>NUCLEOTIDE SEQUENCE [LARGE SCALE GENOMIC DNA]</scope>
    <source>
        <strain>OhILAs</strain>
    </source>
</reference>
<comment type="function">
    <text evidence="1">The RuvA-RuvB-RuvC complex processes Holliday junction (HJ) DNA during genetic recombination and DNA repair. Endonuclease that resolves HJ intermediates. Cleaves cruciform DNA by making single-stranded nicks across the HJ at symmetrical positions within the homologous arms, yielding a 5'-phosphate and a 3'-hydroxyl group; requires a central core of homology in the junction. The consensus cleavage sequence is 5'-(A/T)TT(C/G)-3'. Cleavage occurs on the 3'-side of the TT dinucleotide at the point of strand exchange. HJ branch migration catalyzed by RuvA-RuvB allows RuvC to scan DNA until it finds its consensus sequence, where it cleaves and resolves the cruciform DNA.</text>
</comment>
<comment type="catalytic activity">
    <reaction evidence="1">
        <text>Endonucleolytic cleavage at a junction such as a reciprocal single-stranded crossover between two homologous DNA duplexes (Holliday junction).</text>
        <dbReference type="EC" id="3.1.21.10"/>
    </reaction>
</comment>
<comment type="cofactor">
    <cofactor evidence="1">
        <name>Mg(2+)</name>
        <dbReference type="ChEBI" id="CHEBI:18420"/>
    </cofactor>
    <text evidence="1">Binds 2 Mg(2+) ion per subunit.</text>
</comment>
<comment type="subunit">
    <text evidence="1">Homodimer which binds Holliday junction (HJ) DNA. The HJ becomes 2-fold symmetrical on binding to RuvC with unstacked arms; it has a different conformation from HJ DNA in complex with RuvA. In the full resolvosome a probable DNA-RuvA(4)-RuvB(12)-RuvC(2) complex forms which resolves the HJ.</text>
</comment>
<comment type="subcellular location">
    <subcellularLocation>
        <location evidence="1">Cytoplasm</location>
    </subcellularLocation>
</comment>
<comment type="similarity">
    <text evidence="1">Belongs to the RuvC family.</text>
</comment>